<accession>Q9KKU0</accession>
<sequence>MSIKHHPLQGALWMLTAGLAFAIVNSVAQYASIQFGLPSTTVALVQYAIAIVVILPYLKTLGIRQSLRTQQFGWHLLRVFLAVIGIQLWLWALAYPVPIWQGIALLMTSPLFATIGSGLWLREKVGMARWVATLTGFIGAMIILEPWADDFNLASLLPVGAAFFWASYSLMVKKLSSHDSPSTMVVYLLLLITPFNLLLALPDWQMPNGQTVWLLLIGAGVMTALAQWAIAKAYAVADASFVQPFDHAKLPLNVLAGWLVFGWVPPGRLWLGAAIIVLSVAFITQWETKKSRRERNIA</sequence>
<evidence type="ECO:0000255" key="1"/>
<evidence type="ECO:0000269" key="2">
    <source>
    </source>
</evidence>
<evidence type="ECO:0000303" key="3">
    <source>
    </source>
</evidence>
<evidence type="ECO:0000305" key="4"/>
<evidence type="ECO:0000312" key="5">
    <source>
        <dbReference type="EMBL" id="AAF96906.1"/>
    </source>
</evidence>
<comment type="function">
    <text evidence="2">Transports riboflavin into the cell.</text>
</comment>
<comment type="subcellular location">
    <subcellularLocation>
        <location evidence="4">Cell membrane</location>
        <topology evidence="1">Multi-pass membrane protein</topology>
    </subcellularLocation>
</comment>
<comment type="similarity">
    <text evidence="4">Belongs to the drug/metabolite transporter (DMT) superfamily. 10 TMS drug/metabolite exporter (DME) (TC 2.A.7.3) family.</text>
</comment>
<keyword id="KW-1003">Cell membrane</keyword>
<keyword id="KW-0472">Membrane</keyword>
<keyword id="KW-1185">Reference proteome</keyword>
<keyword id="KW-0677">Repeat</keyword>
<keyword id="KW-0812">Transmembrane</keyword>
<keyword id="KW-1133">Transmembrane helix</keyword>
<keyword id="KW-0813">Transport</keyword>
<proteinExistence type="evidence at protein level"/>
<dbReference type="EMBL" id="AE003853">
    <property type="protein sequence ID" value="AAF96906.1"/>
    <property type="molecule type" value="Genomic_DNA"/>
</dbReference>
<dbReference type="PIR" id="G82389">
    <property type="entry name" value="G82389"/>
</dbReference>
<dbReference type="RefSeq" id="NP_233394.1">
    <property type="nucleotide sequence ID" value="NC_002506.1"/>
</dbReference>
<dbReference type="SMR" id="Q9KKU0"/>
<dbReference type="STRING" id="243277.VC_A1010"/>
<dbReference type="DNASU" id="2612784"/>
<dbReference type="EnsemblBacteria" id="AAF96906">
    <property type="protein sequence ID" value="AAF96906"/>
    <property type="gene ID" value="VC_A1010"/>
</dbReference>
<dbReference type="KEGG" id="vch:VC_A1010"/>
<dbReference type="PATRIC" id="fig|243277.26.peg.3616"/>
<dbReference type="eggNOG" id="COG0697">
    <property type="taxonomic scope" value="Bacteria"/>
</dbReference>
<dbReference type="HOGENOM" id="CLU_032828_0_0_6"/>
<dbReference type="Proteomes" id="UP000000584">
    <property type="component" value="Chromosome 2"/>
</dbReference>
<dbReference type="GO" id="GO:0016020">
    <property type="term" value="C:membrane"/>
    <property type="evidence" value="ECO:0000318"/>
    <property type="project" value="GO_Central"/>
</dbReference>
<dbReference type="GO" id="GO:0005886">
    <property type="term" value="C:plasma membrane"/>
    <property type="evidence" value="ECO:0007669"/>
    <property type="project" value="UniProtKB-SubCell"/>
</dbReference>
<dbReference type="InterPro" id="IPR000620">
    <property type="entry name" value="EamA_dom"/>
</dbReference>
<dbReference type="PANTHER" id="PTHR22911">
    <property type="entry name" value="ACYL-MALONYL CONDENSING ENZYME-RELATED"/>
    <property type="match status" value="1"/>
</dbReference>
<dbReference type="PANTHER" id="PTHR22911:SF6">
    <property type="entry name" value="SOLUTE CARRIER FAMILY 35 MEMBER G1"/>
    <property type="match status" value="1"/>
</dbReference>
<dbReference type="Pfam" id="PF00892">
    <property type="entry name" value="EamA"/>
    <property type="match status" value="2"/>
</dbReference>
<dbReference type="SUPFAM" id="SSF103481">
    <property type="entry name" value="Multidrug resistance efflux transporter EmrE"/>
    <property type="match status" value="2"/>
</dbReference>
<gene>
    <name evidence="3" type="primary">ribN</name>
    <name evidence="5" type="ordered locus">VC_A1010</name>
</gene>
<reference key="1">
    <citation type="journal article" date="2000" name="Nature">
        <title>DNA sequence of both chromosomes of the cholera pathogen Vibrio cholerae.</title>
        <authorList>
            <person name="Heidelberg J.F."/>
            <person name="Eisen J.A."/>
            <person name="Nelson W.C."/>
            <person name="Clayton R.A."/>
            <person name="Gwinn M.L."/>
            <person name="Dodson R.J."/>
            <person name="Haft D.H."/>
            <person name="Hickey E.K."/>
            <person name="Peterson J.D."/>
            <person name="Umayam L.A."/>
            <person name="Gill S.R."/>
            <person name="Nelson K.E."/>
            <person name="Read T.D."/>
            <person name="Tettelin H."/>
            <person name="Richardson D.L."/>
            <person name="Ermolaeva M.D."/>
            <person name="Vamathevan J.J."/>
            <person name="Bass S."/>
            <person name="Qin H."/>
            <person name="Dragoi I."/>
            <person name="Sellers P."/>
            <person name="McDonald L.A."/>
            <person name="Utterback T.R."/>
            <person name="Fleischmann R.D."/>
            <person name="Nierman W.C."/>
            <person name="White O."/>
            <person name="Salzberg S.L."/>
            <person name="Smith H.O."/>
            <person name="Colwell R.R."/>
            <person name="Mekalanos J.J."/>
            <person name="Venter J.C."/>
            <person name="Fraser C.M."/>
        </authorList>
    </citation>
    <scope>NUCLEOTIDE SEQUENCE [LARGE SCALE GENOMIC DNA]</scope>
    <source>
        <strain>ATCC 39315 / El Tor Inaba N16961</strain>
    </source>
</reference>
<reference key="2">
    <citation type="journal article" date="2013" name="J. Bacteriol.">
        <title>Identification and characterization of RibN, a novel family of riboflavin transporters from Rhizobium leguminosarum and other Proteobacteria.</title>
        <authorList>
            <person name="Garcia Angulo V.A."/>
            <person name="Bonomi H.R."/>
            <person name="Posadas D.M."/>
            <person name="Serer M.I."/>
            <person name="Torres A.G."/>
            <person name="Zorreguieta A."/>
            <person name="Goldbaum F.A."/>
        </authorList>
    </citation>
    <scope>FUNCTION AS A TRANSPORTER</scope>
    <source>
        <strain>ATCC 25870 / Classical Inaba 569B / Serotype O1</strain>
    </source>
</reference>
<protein>
    <recommendedName>
        <fullName evidence="3">Riboflavin transporter</fullName>
    </recommendedName>
</protein>
<feature type="chain" id="PRO_0000435360" description="Riboflavin transporter">
    <location>
        <begin position="1"/>
        <end position="298"/>
    </location>
</feature>
<feature type="transmembrane region" description="Helical" evidence="1">
    <location>
        <begin position="8"/>
        <end position="28"/>
    </location>
</feature>
<feature type="transmembrane region" description="Helical" evidence="1">
    <location>
        <begin position="35"/>
        <end position="55"/>
    </location>
</feature>
<feature type="transmembrane region" description="Helical" evidence="1">
    <location>
        <begin position="79"/>
        <end position="99"/>
    </location>
</feature>
<feature type="transmembrane region" description="Helical" evidence="1">
    <location>
        <begin position="101"/>
        <end position="121"/>
    </location>
</feature>
<feature type="transmembrane region" description="Helical" evidence="1">
    <location>
        <begin position="125"/>
        <end position="145"/>
    </location>
</feature>
<feature type="transmembrane region" description="Helical" evidence="1">
    <location>
        <begin position="151"/>
        <end position="171"/>
    </location>
</feature>
<feature type="transmembrane region" description="Helical" evidence="1">
    <location>
        <begin position="184"/>
        <end position="204"/>
    </location>
</feature>
<feature type="transmembrane region" description="Helical" evidence="1">
    <location>
        <begin position="211"/>
        <end position="231"/>
    </location>
</feature>
<feature type="transmembrane region" description="Helical" evidence="1">
    <location>
        <begin position="258"/>
        <end position="278"/>
    </location>
</feature>
<feature type="domain" description="EamA 1" evidence="1">
    <location>
        <begin position="10"/>
        <end position="144"/>
    </location>
</feature>
<feature type="domain" description="EamA 2" evidence="1">
    <location>
        <begin position="156"/>
        <end position="284"/>
    </location>
</feature>
<name>RIBN_VIBCH</name>
<organism>
    <name type="scientific">Vibrio cholerae serotype O1 (strain ATCC 39315 / El Tor Inaba N16961)</name>
    <dbReference type="NCBI Taxonomy" id="243277"/>
    <lineage>
        <taxon>Bacteria</taxon>
        <taxon>Pseudomonadati</taxon>
        <taxon>Pseudomonadota</taxon>
        <taxon>Gammaproteobacteria</taxon>
        <taxon>Vibrionales</taxon>
        <taxon>Vibrionaceae</taxon>
        <taxon>Vibrio</taxon>
    </lineage>
</organism>